<evidence type="ECO:0000255" key="1">
    <source>
        <dbReference type="HAMAP-Rule" id="MF_00036"/>
    </source>
</evidence>
<gene>
    <name evidence="1" type="primary">alaS</name>
    <name type="ordered locus">Pcar_2408</name>
</gene>
<dbReference type="EC" id="6.1.1.7" evidence="1"/>
<dbReference type="EMBL" id="CP000142">
    <property type="protein sequence ID" value="ABA89647.2"/>
    <property type="molecule type" value="Genomic_DNA"/>
</dbReference>
<dbReference type="RefSeq" id="WP_011342173.1">
    <property type="nucleotide sequence ID" value="NC_007498.2"/>
</dbReference>
<dbReference type="SMR" id="Q3A1W0"/>
<dbReference type="STRING" id="338963.Pcar_2408"/>
<dbReference type="KEGG" id="pca:Pcar_2408"/>
<dbReference type="eggNOG" id="COG0013">
    <property type="taxonomic scope" value="Bacteria"/>
</dbReference>
<dbReference type="HOGENOM" id="CLU_004485_1_1_7"/>
<dbReference type="OrthoDB" id="9803884at2"/>
<dbReference type="Proteomes" id="UP000002534">
    <property type="component" value="Chromosome"/>
</dbReference>
<dbReference type="GO" id="GO:0005829">
    <property type="term" value="C:cytosol"/>
    <property type="evidence" value="ECO:0007669"/>
    <property type="project" value="TreeGrafter"/>
</dbReference>
<dbReference type="GO" id="GO:0004813">
    <property type="term" value="F:alanine-tRNA ligase activity"/>
    <property type="evidence" value="ECO:0007669"/>
    <property type="project" value="UniProtKB-UniRule"/>
</dbReference>
<dbReference type="GO" id="GO:0002161">
    <property type="term" value="F:aminoacyl-tRNA deacylase activity"/>
    <property type="evidence" value="ECO:0007669"/>
    <property type="project" value="TreeGrafter"/>
</dbReference>
<dbReference type="GO" id="GO:0005524">
    <property type="term" value="F:ATP binding"/>
    <property type="evidence" value="ECO:0007669"/>
    <property type="project" value="UniProtKB-UniRule"/>
</dbReference>
<dbReference type="GO" id="GO:0000049">
    <property type="term" value="F:tRNA binding"/>
    <property type="evidence" value="ECO:0007669"/>
    <property type="project" value="UniProtKB-KW"/>
</dbReference>
<dbReference type="GO" id="GO:0008270">
    <property type="term" value="F:zinc ion binding"/>
    <property type="evidence" value="ECO:0007669"/>
    <property type="project" value="UniProtKB-UniRule"/>
</dbReference>
<dbReference type="GO" id="GO:0006419">
    <property type="term" value="P:alanyl-tRNA aminoacylation"/>
    <property type="evidence" value="ECO:0007669"/>
    <property type="project" value="UniProtKB-UniRule"/>
</dbReference>
<dbReference type="GO" id="GO:0045892">
    <property type="term" value="P:negative regulation of DNA-templated transcription"/>
    <property type="evidence" value="ECO:0007669"/>
    <property type="project" value="TreeGrafter"/>
</dbReference>
<dbReference type="CDD" id="cd00673">
    <property type="entry name" value="AlaRS_core"/>
    <property type="match status" value="1"/>
</dbReference>
<dbReference type="FunFam" id="3.10.310.40:FF:000001">
    <property type="entry name" value="Alanine--tRNA ligase"/>
    <property type="match status" value="1"/>
</dbReference>
<dbReference type="FunFam" id="3.30.54.20:FF:000001">
    <property type="entry name" value="Alanine--tRNA ligase"/>
    <property type="match status" value="1"/>
</dbReference>
<dbReference type="FunFam" id="3.30.930.10:FF:000004">
    <property type="entry name" value="Alanine--tRNA ligase"/>
    <property type="match status" value="1"/>
</dbReference>
<dbReference type="FunFam" id="3.30.980.10:FF:000004">
    <property type="entry name" value="Alanine--tRNA ligase, cytoplasmic"/>
    <property type="match status" value="1"/>
</dbReference>
<dbReference type="Gene3D" id="2.40.30.130">
    <property type="match status" value="1"/>
</dbReference>
<dbReference type="Gene3D" id="3.10.310.40">
    <property type="match status" value="1"/>
</dbReference>
<dbReference type="Gene3D" id="3.30.54.20">
    <property type="match status" value="1"/>
</dbReference>
<dbReference type="Gene3D" id="6.10.250.550">
    <property type="match status" value="1"/>
</dbReference>
<dbReference type="Gene3D" id="3.30.930.10">
    <property type="entry name" value="Bira Bifunctional Protein, Domain 2"/>
    <property type="match status" value="1"/>
</dbReference>
<dbReference type="Gene3D" id="3.30.980.10">
    <property type="entry name" value="Threonyl-trna Synthetase, Chain A, domain 2"/>
    <property type="match status" value="1"/>
</dbReference>
<dbReference type="HAMAP" id="MF_00036_B">
    <property type="entry name" value="Ala_tRNA_synth_B"/>
    <property type="match status" value="1"/>
</dbReference>
<dbReference type="InterPro" id="IPR045864">
    <property type="entry name" value="aa-tRNA-synth_II/BPL/LPL"/>
</dbReference>
<dbReference type="InterPro" id="IPR002318">
    <property type="entry name" value="Ala-tRNA-lgiase_IIc"/>
</dbReference>
<dbReference type="InterPro" id="IPR018162">
    <property type="entry name" value="Ala-tRNA-ligase_IIc_anticod-bd"/>
</dbReference>
<dbReference type="InterPro" id="IPR018165">
    <property type="entry name" value="Ala-tRNA-synth_IIc_core"/>
</dbReference>
<dbReference type="InterPro" id="IPR018164">
    <property type="entry name" value="Ala-tRNA-synth_IIc_N"/>
</dbReference>
<dbReference type="InterPro" id="IPR050058">
    <property type="entry name" value="Ala-tRNA_ligase"/>
</dbReference>
<dbReference type="InterPro" id="IPR023033">
    <property type="entry name" value="Ala_tRNA_ligase_euk/bac"/>
</dbReference>
<dbReference type="InterPro" id="IPR003156">
    <property type="entry name" value="DHHA1_dom"/>
</dbReference>
<dbReference type="InterPro" id="IPR018163">
    <property type="entry name" value="Thr/Ala-tRNA-synth_IIc_edit"/>
</dbReference>
<dbReference type="InterPro" id="IPR009000">
    <property type="entry name" value="Transl_B-barrel_sf"/>
</dbReference>
<dbReference type="InterPro" id="IPR012947">
    <property type="entry name" value="tRNA_SAD"/>
</dbReference>
<dbReference type="NCBIfam" id="TIGR00344">
    <property type="entry name" value="alaS"/>
    <property type="match status" value="1"/>
</dbReference>
<dbReference type="PANTHER" id="PTHR11777:SF9">
    <property type="entry name" value="ALANINE--TRNA LIGASE, CYTOPLASMIC"/>
    <property type="match status" value="1"/>
</dbReference>
<dbReference type="PANTHER" id="PTHR11777">
    <property type="entry name" value="ALANYL-TRNA SYNTHETASE"/>
    <property type="match status" value="1"/>
</dbReference>
<dbReference type="Pfam" id="PF02272">
    <property type="entry name" value="DHHA1"/>
    <property type="match status" value="1"/>
</dbReference>
<dbReference type="Pfam" id="PF01411">
    <property type="entry name" value="tRNA-synt_2c"/>
    <property type="match status" value="1"/>
</dbReference>
<dbReference type="Pfam" id="PF07973">
    <property type="entry name" value="tRNA_SAD"/>
    <property type="match status" value="1"/>
</dbReference>
<dbReference type="PRINTS" id="PR00980">
    <property type="entry name" value="TRNASYNTHALA"/>
</dbReference>
<dbReference type="SMART" id="SM00863">
    <property type="entry name" value="tRNA_SAD"/>
    <property type="match status" value="1"/>
</dbReference>
<dbReference type="SUPFAM" id="SSF55681">
    <property type="entry name" value="Class II aaRS and biotin synthetases"/>
    <property type="match status" value="1"/>
</dbReference>
<dbReference type="SUPFAM" id="SSF101353">
    <property type="entry name" value="Putative anticodon-binding domain of alanyl-tRNA synthetase (AlaRS)"/>
    <property type="match status" value="1"/>
</dbReference>
<dbReference type="SUPFAM" id="SSF55186">
    <property type="entry name" value="ThrRS/AlaRS common domain"/>
    <property type="match status" value="1"/>
</dbReference>
<dbReference type="SUPFAM" id="SSF50447">
    <property type="entry name" value="Translation proteins"/>
    <property type="match status" value="1"/>
</dbReference>
<dbReference type="PROSITE" id="PS50860">
    <property type="entry name" value="AA_TRNA_LIGASE_II_ALA"/>
    <property type="match status" value="1"/>
</dbReference>
<protein>
    <recommendedName>
        <fullName evidence="1">Alanine--tRNA ligase</fullName>
        <ecNumber evidence="1">6.1.1.7</ecNumber>
    </recommendedName>
    <alternativeName>
        <fullName evidence="1">Alanyl-tRNA synthetase</fullName>
        <shortName evidence="1">AlaRS</shortName>
    </alternativeName>
</protein>
<name>SYA_SYNC1</name>
<feature type="chain" id="PRO_0000347715" description="Alanine--tRNA ligase">
    <location>
        <begin position="1"/>
        <end position="882"/>
    </location>
</feature>
<feature type="binding site" evidence="1">
    <location>
        <position position="568"/>
    </location>
    <ligand>
        <name>Zn(2+)</name>
        <dbReference type="ChEBI" id="CHEBI:29105"/>
    </ligand>
</feature>
<feature type="binding site" evidence="1">
    <location>
        <position position="572"/>
    </location>
    <ligand>
        <name>Zn(2+)</name>
        <dbReference type="ChEBI" id="CHEBI:29105"/>
    </ligand>
</feature>
<feature type="binding site" evidence="1">
    <location>
        <position position="670"/>
    </location>
    <ligand>
        <name>Zn(2+)</name>
        <dbReference type="ChEBI" id="CHEBI:29105"/>
    </ligand>
</feature>
<feature type="binding site" evidence="1">
    <location>
        <position position="674"/>
    </location>
    <ligand>
        <name>Zn(2+)</name>
        <dbReference type="ChEBI" id="CHEBI:29105"/>
    </ligand>
</feature>
<organism>
    <name type="scientific">Syntrophotalea carbinolica (strain DSM 2380 / NBRC 103641 / GraBd1)</name>
    <name type="common">Pelobacter carbinolicus</name>
    <dbReference type="NCBI Taxonomy" id="338963"/>
    <lineage>
        <taxon>Bacteria</taxon>
        <taxon>Pseudomonadati</taxon>
        <taxon>Thermodesulfobacteriota</taxon>
        <taxon>Desulfuromonadia</taxon>
        <taxon>Desulfuromonadales</taxon>
        <taxon>Syntrophotaleaceae</taxon>
        <taxon>Syntrophotalea</taxon>
    </lineage>
</organism>
<reference key="1">
    <citation type="submission" date="2005-10" db="EMBL/GenBank/DDBJ databases">
        <title>Complete sequence of Pelobacter carbinolicus DSM 2380.</title>
        <authorList>
            <person name="Copeland A."/>
            <person name="Lucas S."/>
            <person name="Lapidus A."/>
            <person name="Barry K."/>
            <person name="Detter J.C."/>
            <person name="Glavina T."/>
            <person name="Hammon N."/>
            <person name="Israni S."/>
            <person name="Pitluck S."/>
            <person name="Chertkov O."/>
            <person name="Schmutz J."/>
            <person name="Larimer F."/>
            <person name="Land M."/>
            <person name="Kyrpides N."/>
            <person name="Ivanova N."/>
            <person name="Richardson P."/>
        </authorList>
    </citation>
    <scope>NUCLEOTIDE SEQUENCE [LARGE SCALE GENOMIC DNA]</scope>
    <source>
        <strain>DSM 2380 / NBRC 103641 / GraBd1</strain>
    </source>
</reference>
<accession>Q3A1W0</accession>
<comment type="function">
    <text evidence="1">Catalyzes the attachment of alanine to tRNA(Ala) in a two-step reaction: alanine is first activated by ATP to form Ala-AMP and then transferred to the acceptor end of tRNA(Ala). Also edits incorrectly charged Ser-tRNA(Ala) and Gly-tRNA(Ala) via its editing domain.</text>
</comment>
<comment type="catalytic activity">
    <reaction evidence="1">
        <text>tRNA(Ala) + L-alanine + ATP = L-alanyl-tRNA(Ala) + AMP + diphosphate</text>
        <dbReference type="Rhea" id="RHEA:12540"/>
        <dbReference type="Rhea" id="RHEA-COMP:9657"/>
        <dbReference type="Rhea" id="RHEA-COMP:9923"/>
        <dbReference type="ChEBI" id="CHEBI:30616"/>
        <dbReference type="ChEBI" id="CHEBI:33019"/>
        <dbReference type="ChEBI" id="CHEBI:57972"/>
        <dbReference type="ChEBI" id="CHEBI:78442"/>
        <dbReference type="ChEBI" id="CHEBI:78497"/>
        <dbReference type="ChEBI" id="CHEBI:456215"/>
        <dbReference type="EC" id="6.1.1.7"/>
    </reaction>
</comment>
<comment type="cofactor">
    <cofactor evidence="1">
        <name>Zn(2+)</name>
        <dbReference type="ChEBI" id="CHEBI:29105"/>
    </cofactor>
    <text evidence="1">Binds 1 zinc ion per subunit.</text>
</comment>
<comment type="subcellular location">
    <subcellularLocation>
        <location evidence="1">Cytoplasm</location>
    </subcellularLocation>
</comment>
<comment type="domain">
    <text evidence="1">Consists of three domains; the N-terminal catalytic domain, the editing domain and the C-terminal C-Ala domain. The editing domain removes incorrectly charged amino acids, while the C-Ala domain, along with tRNA(Ala), serves as a bridge to cooperatively bring together the editing and aminoacylation centers thus stimulating deacylation of misacylated tRNAs.</text>
</comment>
<comment type="similarity">
    <text evidence="1">Belongs to the class-II aminoacyl-tRNA synthetase family.</text>
</comment>
<keyword id="KW-0030">Aminoacyl-tRNA synthetase</keyword>
<keyword id="KW-0067">ATP-binding</keyword>
<keyword id="KW-0963">Cytoplasm</keyword>
<keyword id="KW-0436">Ligase</keyword>
<keyword id="KW-0479">Metal-binding</keyword>
<keyword id="KW-0547">Nucleotide-binding</keyword>
<keyword id="KW-0648">Protein biosynthesis</keyword>
<keyword id="KW-1185">Reference proteome</keyword>
<keyword id="KW-0694">RNA-binding</keyword>
<keyword id="KW-0820">tRNA-binding</keyword>
<keyword id="KW-0862">Zinc</keyword>
<sequence>MTGNEIRSRFLKFFQDHGHTVVPSSALIPHNDPTLLFINAGMNQFKDVFLGREKRDYVRATSAQKCVRAGGKHNDLENVGQTARHHTFFEMLGNFSFGDYFKKEAIDHAWKFLTEEMGLPKDKLWVTVFREDDEAYDIWRDQQGIPEERLIRMGEKDNFWSMGDTGPCGPCSEILIDQGESMSCGDECGIGKCDCDRYLELWNLVFMQFNRDADGTMTPLPKPSIDTGMGLERITAVMQGVQSNYDCDLLRGIIAHVEELSGKRYGDNAEHDMSMRVIADHSRATAFLIADGVLPSNEGRGYVLRRIMRRAARHAKMLGFADPVLYRTATFVLQSMAEAYPEPAQRADYVAKIVKIEEERFIQTLDNGLRILTEEVERLKAANATVLPGDVAFKLYDTFGFPLDLTADILRGENVTIDEDGFEACMEEQRQKAREHWKGSGEEAISGIYRQLAEEGARTDFTGYGELTGQSEILAILLDGQPVSSAPAGAKVEIVTAATPFYGESGGQTGDCGTLAAGDAEVTITDTKKPLPELFVHVGEIAAGTLQTGETATLTVDRERRQATALNHTATHLLQAALVEVLGEHVKQAGSLVTPERLRFDFIHFSAMSAEELERVETLVNCRIRENAGVDTREMDHEQAVAEGATALFGEKYGDKVRVVRVGDISMELCGGTHANASGDIGLFKILQETGIAAGVRRIEAVTGAKALQVVRDQERTLDDLASLIKTDRPQLEARLRKLLERQKELEREIESLQGKLNADQAGDLLQQATEIDGISVVCGRVDNLDGKALRELADQVRDRLSSGVLILGSAHEGKAGLLVAVTKDLTKRLQAGALVKQLAAMVGGGGGGRPDLAQAGGSKPEQLDEALASVPQRISEALNAA</sequence>
<proteinExistence type="inferred from homology"/>